<evidence type="ECO:0000255" key="1">
    <source>
        <dbReference type="HAMAP-Rule" id="MF_00596"/>
    </source>
</evidence>
<organism>
    <name type="scientific">Shigella dysenteriae serotype 1 (strain Sd197)</name>
    <dbReference type="NCBI Taxonomy" id="300267"/>
    <lineage>
        <taxon>Bacteria</taxon>
        <taxon>Pseudomonadati</taxon>
        <taxon>Pseudomonadota</taxon>
        <taxon>Gammaproteobacteria</taxon>
        <taxon>Enterobacterales</taxon>
        <taxon>Enterobacteriaceae</taxon>
        <taxon>Shigella</taxon>
    </lineage>
</organism>
<proteinExistence type="inferred from homology"/>
<name>GUAC_SHIDS</name>
<feature type="chain" id="PRO_1000025619" description="GMP reductase">
    <location>
        <begin position="1"/>
        <end position="347"/>
    </location>
</feature>
<feature type="active site" description="Thioimidate intermediate" evidence="1">
    <location>
        <position position="186"/>
    </location>
</feature>
<feature type="binding site" evidence="1">
    <location>
        <begin position="108"/>
        <end position="131"/>
    </location>
    <ligand>
        <name>NADP(+)</name>
        <dbReference type="ChEBI" id="CHEBI:58349"/>
    </ligand>
</feature>
<feature type="binding site" evidence="1">
    <location>
        <position position="181"/>
    </location>
    <ligand>
        <name>K(+)</name>
        <dbReference type="ChEBI" id="CHEBI:29103"/>
    </ligand>
</feature>
<feature type="binding site" evidence="1">
    <location>
        <position position="183"/>
    </location>
    <ligand>
        <name>K(+)</name>
        <dbReference type="ChEBI" id="CHEBI:29103"/>
    </ligand>
</feature>
<feature type="binding site" evidence="1">
    <location>
        <begin position="216"/>
        <end position="239"/>
    </location>
    <ligand>
        <name>NADP(+)</name>
        <dbReference type="ChEBI" id="CHEBI:58349"/>
    </ligand>
</feature>
<comment type="function">
    <text evidence="1">Catalyzes the irreversible NADPH-dependent deamination of GMP to IMP. It functions in the conversion of nucleobase, nucleoside and nucleotide derivatives of G to A nucleotides, and in maintaining the intracellular balance of A and G nucleotides.</text>
</comment>
<comment type="catalytic activity">
    <reaction evidence="1">
        <text>IMP + NH4(+) + NADP(+) = GMP + NADPH + 2 H(+)</text>
        <dbReference type="Rhea" id="RHEA:17185"/>
        <dbReference type="ChEBI" id="CHEBI:15378"/>
        <dbReference type="ChEBI" id="CHEBI:28938"/>
        <dbReference type="ChEBI" id="CHEBI:57783"/>
        <dbReference type="ChEBI" id="CHEBI:58053"/>
        <dbReference type="ChEBI" id="CHEBI:58115"/>
        <dbReference type="ChEBI" id="CHEBI:58349"/>
        <dbReference type="EC" id="1.7.1.7"/>
    </reaction>
</comment>
<comment type="subunit">
    <text evidence="1">Homotetramer.</text>
</comment>
<comment type="similarity">
    <text evidence="1">Belongs to the IMPDH/GMPR family. GuaC type 1 subfamily.</text>
</comment>
<accession>Q32JY8</accession>
<gene>
    <name evidence="1" type="primary">guaC</name>
    <name type="ordered locus">SDY_0134</name>
</gene>
<keyword id="KW-0479">Metal-binding</keyword>
<keyword id="KW-0521">NADP</keyword>
<keyword id="KW-0560">Oxidoreductase</keyword>
<keyword id="KW-0630">Potassium</keyword>
<keyword id="KW-1185">Reference proteome</keyword>
<dbReference type="EC" id="1.7.1.7" evidence="1"/>
<dbReference type="EMBL" id="CP000034">
    <property type="protein sequence ID" value="ABB60369.1"/>
    <property type="molecule type" value="Genomic_DNA"/>
</dbReference>
<dbReference type="RefSeq" id="WP_001217371.1">
    <property type="nucleotide sequence ID" value="NC_007606.1"/>
</dbReference>
<dbReference type="RefSeq" id="YP_401858.1">
    <property type="nucleotide sequence ID" value="NC_007606.1"/>
</dbReference>
<dbReference type="SMR" id="Q32JY8"/>
<dbReference type="STRING" id="300267.SDY_0134"/>
<dbReference type="EnsemblBacteria" id="ABB60369">
    <property type="protein sequence ID" value="ABB60369"/>
    <property type="gene ID" value="SDY_0134"/>
</dbReference>
<dbReference type="KEGG" id="sdy:SDY_0134"/>
<dbReference type="PATRIC" id="fig|300267.13.peg.152"/>
<dbReference type="HOGENOM" id="CLU_022552_5_3_6"/>
<dbReference type="Proteomes" id="UP000002716">
    <property type="component" value="Chromosome"/>
</dbReference>
<dbReference type="GO" id="GO:0005829">
    <property type="term" value="C:cytosol"/>
    <property type="evidence" value="ECO:0007669"/>
    <property type="project" value="TreeGrafter"/>
</dbReference>
<dbReference type="GO" id="GO:1902560">
    <property type="term" value="C:GMP reductase complex"/>
    <property type="evidence" value="ECO:0007669"/>
    <property type="project" value="InterPro"/>
</dbReference>
<dbReference type="GO" id="GO:0003920">
    <property type="term" value="F:GMP reductase activity"/>
    <property type="evidence" value="ECO:0007669"/>
    <property type="project" value="UniProtKB-UniRule"/>
</dbReference>
<dbReference type="GO" id="GO:0046872">
    <property type="term" value="F:metal ion binding"/>
    <property type="evidence" value="ECO:0007669"/>
    <property type="project" value="UniProtKB-KW"/>
</dbReference>
<dbReference type="GO" id="GO:0006163">
    <property type="term" value="P:purine nucleotide metabolic process"/>
    <property type="evidence" value="ECO:0007669"/>
    <property type="project" value="UniProtKB-UniRule"/>
</dbReference>
<dbReference type="CDD" id="cd00381">
    <property type="entry name" value="IMPDH"/>
    <property type="match status" value="1"/>
</dbReference>
<dbReference type="FunFam" id="3.20.20.70:FF:000012">
    <property type="entry name" value="GMP reductase"/>
    <property type="match status" value="1"/>
</dbReference>
<dbReference type="Gene3D" id="3.20.20.70">
    <property type="entry name" value="Aldolase class I"/>
    <property type="match status" value="1"/>
</dbReference>
<dbReference type="HAMAP" id="MF_00596">
    <property type="entry name" value="GMP_reduct_type1"/>
    <property type="match status" value="1"/>
</dbReference>
<dbReference type="InterPro" id="IPR013785">
    <property type="entry name" value="Aldolase_TIM"/>
</dbReference>
<dbReference type="InterPro" id="IPR050139">
    <property type="entry name" value="GMP_reductase"/>
</dbReference>
<dbReference type="InterPro" id="IPR005993">
    <property type="entry name" value="GMPR"/>
</dbReference>
<dbReference type="InterPro" id="IPR015875">
    <property type="entry name" value="IMP_DH/GMP_Rdtase_CS"/>
</dbReference>
<dbReference type="InterPro" id="IPR001093">
    <property type="entry name" value="IMP_DH_GMPRt"/>
</dbReference>
<dbReference type="NCBIfam" id="TIGR01305">
    <property type="entry name" value="GMP_reduct_1"/>
    <property type="match status" value="1"/>
</dbReference>
<dbReference type="NCBIfam" id="NF003470">
    <property type="entry name" value="PRK05096.1"/>
    <property type="match status" value="1"/>
</dbReference>
<dbReference type="PANTHER" id="PTHR43170">
    <property type="entry name" value="GMP REDUCTASE"/>
    <property type="match status" value="1"/>
</dbReference>
<dbReference type="PANTHER" id="PTHR43170:SF5">
    <property type="entry name" value="GMP REDUCTASE"/>
    <property type="match status" value="1"/>
</dbReference>
<dbReference type="Pfam" id="PF00478">
    <property type="entry name" value="IMPDH"/>
    <property type="match status" value="1"/>
</dbReference>
<dbReference type="PIRSF" id="PIRSF000235">
    <property type="entry name" value="GMP_reductase"/>
    <property type="match status" value="1"/>
</dbReference>
<dbReference type="SMART" id="SM01240">
    <property type="entry name" value="IMPDH"/>
    <property type="match status" value="1"/>
</dbReference>
<dbReference type="SUPFAM" id="SSF51412">
    <property type="entry name" value="Inosine monophosphate dehydrogenase (IMPDH)"/>
    <property type="match status" value="1"/>
</dbReference>
<dbReference type="PROSITE" id="PS00487">
    <property type="entry name" value="IMP_DH_GMP_RED"/>
    <property type="match status" value="1"/>
</dbReference>
<reference key="1">
    <citation type="journal article" date="2005" name="Nucleic Acids Res.">
        <title>Genome dynamics and diversity of Shigella species, the etiologic agents of bacillary dysentery.</title>
        <authorList>
            <person name="Yang F."/>
            <person name="Yang J."/>
            <person name="Zhang X."/>
            <person name="Chen L."/>
            <person name="Jiang Y."/>
            <person name="Yan Y."/>
            <person name="Tang X."/>
            <person name="Wang J."/>
            <person name="Xiong Z."/>
            <person name="Dong J."/>
            <person name="Xue Y."/>
            <person name="Zhu Y."/>
            <person name="Xu X."/>
            <person name="Sun L."/>
            <person name="Chen S."/>
            <person name="Nie H."/>
            <person name="Peng J."/>
            <person name="Xu J."/>
            <person name="Wang Y."/>
            <person name="Yuan Z."/>
            <person name="Wen Y."/>
            <person name="Yao Z."/>
            <person name="Shen Y."/>
            <person name="Qiang B."/>
            <person name="Hou Y."/>
            <person name="Yu J."/>
            <person name="Jin Q."/>
        </authorList>
    </citation>
    <scope>NUCLEOTIDE SEQUENCE [LARGE SCALE GENOMIC DNA]</scope>
    <source>
        <strain>Sd197</strain>
    </source>
</reference>
<sequence>MRIEEDLKLGFKEVLIRPKRSTLKSRSDVELERQFTFKHSGQSWSGVPIIAANMDTVGTFSMASALASFDILTAVHKHYSVEEWQAFINNSSADVLKHVMVSTGTSDADFEKTKQILDLNPALNFVCIDVANGYSEHFVQFVAKAREAWPTKTICAGNVVTGEMCEELILSGADIVKVGIGPGSVCTTRVKTGVGYPQLSAVIECADAAHGLGGMIVSDGGCTTPGDVAKAFGGGADFVMLGGMLAGHEESGGRIVEENGEKFMLFYGMSSESAMKRHVGGVAEYRAAEGKTVKLPLRGPVENTARDILGGLRSACTYVGASRLKELTKRTTFIRVQEQENRIFNNL</sequence>
<protein>
    <recommendedName>
        <fullName evidence="1">GMP reductase</fullName>
        <ecNumber evidence="1">1.7.1.7</ecNumber>
    </recommendedName>
    <alternativeName>
        <fullName evidence="1">Guanosine 5'-monophosphate oxidoreductase</fullName>
        <shortName evidence="1">Guanosine monophosphate reductase</shortName>
    </alternativeName>
</protein>